<proteinExistence type="evidence at transcript level"/>
<sequence>MELTAVLLLLGLCSAGTVLGSEHETRLVAKLFKDYSSVVRPVGDHREIVQVTVGLQLIQLINVDEVNQIVTTNVRLKQQWVDYNLKWNPDDYGGVKKIHIPSEKIWRPDVVLYNNADGDFAIVKFTKVLLDYTGHITWTPPAIFKSYCEIIVTHFPFDEQNCSMKLGTWTYDGSVVAINPESDQPDLSNFMESGEWVIKEARGWKHWVFYSCCPNTPYLDITYHFVMQRLPLYFIVNVIIPCLLFSFLTSLVFYLPTDSGEKMTLSISVLLSLTVFLLVIVELIPSTSSAVPLIGKYMLFTMVFVIASIIITVIVINTHHRSPSTHIMPEWVRKVFIDTIPNIMFFSTMKRPSRDKQEKRIFTEDIDISDISGKPGPPPMGFHSPLIKHPEVKSAIEGVKYIAETMKSDQESNNASEEWKYVAMVMDHILLGVFMLVCLIGTLAVFAGRLIELHQQG</sequence>
<comment type="function">
    <text evidence="2">Upon acetylcholine binding, the AChR responds by an extensive change in conformation that affects all subunits and leads to opening of an ion-conducting channel across the plasma membrane.</text>
</comment>
<comment type="catalytic activity">
    <reaction evidence="3">
        <text>K(+)(in) = K(+)(out)</text>
        <dbReference type="Rhea" id="RHEA:29463"/>
        <dbReference type="ChEBI" id="CHEBI:29103"/>
    </reaction>
</comment>
<comment type="catalytic activity">
    <reaction evidence="3">
        <text>Na(+)(in) = Na(+)(out)</text>
        <dbReference type="Rhea" id="RHEA:34963"/>
        <dbReference type="ChEBI" id="CHEBI:29101"/>
    </reaction>
</comment>
<comment type="subunit">
    <text evidence="2">One of the alpha chains that assemble within the acetylcholine receptor, a pentamer of two alpha chains, a beta, a delta, and a gamma (in immature muscle) or epsilon (in mature muscle) chains. The muscle heteropentamer composed of alpha-1, beta-1, delta, epsilon subunits interacts with the alpha-conotoxin ImII.</text>
</comment>
<comment type="subcellular location">
    <subcellularLocation>
        <location evidence="2">Postsynaptic cell membrane</location>
        <topology evidence="4">Multi-pass membrane protein</topology>
    </subcellularLocation>
    <subcellularLocation>
        <location evidence="2">Cell membrane</location>
        <topology evidence="4">Multi-pass membrane protein</topology>
    </subcellularLocation>
</comment>
<comment type="similarity">
    <text evidence="5">Belongs to the ligand-gated ion channel (TC 1.A.9) family. Acetylcholine receptor (TC 1.A.9.1) subfamily. Alpha-1/CHRNA1 sub-subfamily.</text>
</comment>
<protein>
    <recommendedName>
        <fullName>Acetylcholine receptor subunit alpha</fullName>
    </recommendedName>
</protein>
<keyword id="KW-1003">Cell membrane</keyword>
<keyword id="KW-1015">Disulfide bond</keyword>
<keyword id="KW-0325">Glycoprotein</keyword>
<keyword id="KW-0407">Ion channel</keyword>
<keyword id="KW-0406">Ion transport</keyword>
<keyword id="KW-1071">Ligand-gated ion channel</keyword>
<keyword id="KW-0472">Membrane</keyword>
<keyword id="KW-0628">Postsynaptic cell membrane</keyword>
<keyword id="KW-0675">Receptor</keyword>
<keyword id="KW-1185">Reference proteome</keyword>
<keyword id="KW-0732">Signal</keyword>
<keyword id="KW-0770">Synapse</keyword>
<keyword id="KW-0812">Transmembrane</keyword>
<keyword id="KW-1133">Transmembrane helix</keyword>
<keyword id="KW-0813">Transport</keyword>
<gene>
    <name type="primary">Chrna1</name>
    <name type="synonym">Acra</name>
</gene>
<feature type="signal peptide" evidence="1">
    <location>
        <begin position="1"/>
        <end position="20"/>
    </location>
</feature>
<feature type="chain" id="PRO_0000000307" description="Acetylcholine receptor subunit alpha">
    <location>
        <begin position="21"/>
        <end position="457"/>
    </location>
</feature>
<feature type="topological domain" description="Extracellular" evidence="4">
    <location>
        <begin position="21"/>
        <end position="230"/>
    </location>
</feature>
<feature type="transmembrane region" description="Helical" evidence="4">
    <location>
        <begin position="231"/>
        <end position="255"/>
    </location>
</feature>
<feature type="transmembrane region" description="Helical" evidence="4">
    <location>
        <begin position="263"/>
        <end position="281"/>
    </location>
</feature>
<feature type="transmembrane region" description="Helical" evidence="4">
    <location>
        <begin position="297"/>
        <end position="316"/>
    </location>
</feature>
<feature type="topological domain" description="Cytoplasmic" evidence="4">
    <location>
        <begin position="317"/>
        <end position="428"/>
    </location>
</feature>
<feature type="transmembrane region" description="Helical" evidence="4">
    <location>
        <begin position="429"/>
        <end position="447"/>
    </location>
</feature>
<feature type="glycosylation site" description="N-linked (GlcNAc...) asparagine" evidence="4">
    <location>
        <position position="161"/>
    </location>
</feature>
<feature type="disulfide bond" evidence="1">
    <location>
        <begin position="148"/>
        <end position="162"/>
    </location>
</feature>
<feature type="disulfide bond" description="Associated with receptor activation" evidence="1">
    <location>
        <begin position="212"/>
        <end position="213"/>
    </location>
</feature>
<name>ACHA_RAT</name>
<accession>P25108</accession>
<dbReference type="EMBL" id="X74832">
    <property type="protein sequence ID" value="CAA52826.1"/>
    <property type="molecule type" value="mRNA"/>
</dbReference>
<dbReference type="PIR" id="S13872">
    <property type="entry name" value="S13872"/>
</dbReference>
<dbReference type="RefSeq" id="NP_077811.1">
    <property type="nucleotide sequence ID" value="NM_024485.2"/>
</dbReference>
<dbReference type="SMR" id="P25108"/>
<dbReference type="ComplexPortal" id="CPX-253">
    <property type="entry name" value="Muscle-type nicotinic acetylcholine receptor complex, alpha1-beta1-delta-gamma"/>
</dbReference>
<dbReference type="ComplexPortal" id="CPX-258">
    <property type="entry name" value="Muscle-type nicotinic acetylcholine receptor complex, alpha1-beta1-delta-epsilon"/>
</dbReference>
<dbReference type="FunCoup" id="P25108">
    <property type="interactions" value="51"/>
</dbReference>
<dbReference type="STRING" id="10116.ENSRNOP00000024706"/>
<dbReference type="BindingDB" id="P25108"/>
<dbReference type="ChEMBL" id="CHEMBL3885509"/>
<dbReference type="ChEMBL" id="CHEMBL4523658"/>
<dbReference type="DrugCentral" id="P25108"/>
<dbReference type="GlyCosmos" id="P25108">
    <property type="glycosylation" value="1 site, No reported glycans"/>
</dbReference>
<dbReference type="GlyGen" id="P25108">
    <property type="glycosylation" value="1 site"/>
</dbReference>
<dbReference type="PhosphoSitePlus" id="P25108"/>
<dbReference type="PaxDb" id="10116-ENSRNOP00000024706"/>
<dbReference type="ABCD" id="P25108">
    <property type="antibodies" value="3 sequenced antibodies"/>
</dbReference>
<dbReference type="Ensembl" id="ENSRNOT00000024706.5">
    <property type="protein sequence ID" value="ENSRNOP00000024706.3"/>
    <property type="gene ID" value="ENSRNOG00000018286.5"/>
</dbReference>
<dbReference type="GeneID" id="79557"/>
<dbReference type="KEGG" id="rno:79557"/>
<dbReference type="UCSC" id="RGD:69277">
    <property type="organism name" value="rat"/>
</dbReference>
<dbReference type="AGR" id="RGD:69277"/>
<dbReference type="CTD" id="1134"/>
<dbReference type="RGD" id="69277">
    <property type="gene designation" value="Chrna1"/>
</dbReference>
<dbReference type="eggNOG" id="KOG3645">
    <property type="taxonomic scope" value="Eukaryota"/>
</dbReference>
<dbReference type="GeneTree" id="ENSGT00940000156851"/>
<dbReference type="HOGENOM" id="CLU_018074_1_0_1"/>
<dbReference type="InParanoid" id="P25108"/>
<dbReference type="OMA" id="GHITWNP"/>
<dbReference type="OrthoDB" id="5975154at2759"/>
<dbReference type="PhylomeDB" id="P25108"/>
<dbReference type="TreeFam" id="TF315605"/>
<dbReference type="Reactome" id="R-RNO-629594">
    <property type="pathway name" value="Highly calcium permeable postsynaptic nicotinic acetylcholine receptors"/>
</dbReference>
<dbReference type="Reactome" id="R-RNO-629597">
    <property type="pathway name" value="Highly calcium permeable nicotinic acetylcholine receptors"/>
</dbReference>
<dbReference type="PRO" id="PR:P25108"/>
<dbReference type="Proteomes" id="UP000002494">
    <property type="component" value="Chromosome 3"/>
</dbReference>
<dbReference type="Bgee" id="ENSRNOG00000018286">
    <property type="expression patterns" value="Expressed in esophagus and 5 other cell types or tissues"/>
</dbReference>
<dbReference type="GO" id="GO:0005892">
    <property type="term" value="C:acetylcholine-gated channel complex"/>
    <property type="evidence" value="ECO:0000314"/>
    <property type="project" value="RGD"/>
</dbReference>
<dbReference type="GO" id="GO:0009986">
    <property type="term" value="C:cell surface"/>
    <property type="evidence" value="ECO:0000266"/>
    <property type="project" value="RGD"/>
</dbReference>
<dbReference type="GO" id="GO:0016020">
    <property type="term" value="C:membrane"/>
    <property type="evidence" value="ECO:0000266"/>
    <property type="project" value="RGD"/>
</dbReference>
<dbReference type="GO" id="GO:0031594">
    <property type="term" value="C:neuromuscular junction"/>
    <property type="evidence" value="ECO:0000266"/>
    <property type="project" value="RGD"/>
</dbReference>
<dbReference type="GO" id="GO:0043005">
    <property type="term" value="C:neuron projection"/>
    <property type="evidence" value="ECO:0000318"/>
    <property type="project" value="GO_Central"/>
</dbReference>
<dbReference type="GO" id="GO:0005886">
    <property type="term" value="C:plasma membrane"/>
    <property type="evidence" value="ECO:0000266"/>
    <property type="project" value="RGD"/>
</dbReference>
<dbReference type="GO" id="GO:0099634">
    <property type="term" value="C:postsynaptic specialization membrane"/>
    <property type="evidence" value="ECO:0000266"/>
    <property type="project" value="RGD"/>
</dbReference>
<dbReference type="GO" id="GO:0045202">
    <property type="term" value="C:synapse"/>
    <property type="evidence" value="ECO:0000318"/>
    <property type="project" value="GO_Central"/>
</dbReference>
<dbReference type="GO" id="GO:0042166">
    <property type="term" value="F:acetylcholine binding"/>
    <property type="evidence" value="ECO:0007669"/>
    <property type="project" value="Ensembl"/>
</dbReference>
<dbReference type="GO" id="GO:0015464">
    <property type="term" value="F:acetylcholine receptor activity"/>
    <property type="evidence" value="ECO:0007669"/>
    <property type="project" value="Ensembl"/>
</dbReference>
<dbReference type="GO" id="GO:0022848">
    <property type="term" value="F:acetylcholine-gated monoatomic cation-selective channel activity"/>
    <property type="evidence" value="ECO:0000314"/>
    <property type="project" value="RGD"/>
</dbReference>
<dbReference type="GO" id="GO:1904315">
    <property type="term" value="F:transmitter-gated monoatomic ion channel activity involved in regulation of postsynaptic membrane potential"/>
    <property type="evidence" value="ECO:0000266"/>
    <property type="project" value="RGD"/>
</dbReference>
<dbReference type="GO" id="GO:0095500">
    <property type="term" value="P:acetylcholine receptor signaling pathway"/>
    <property type="evidence" value="ECO:0000318"/>
    <property type="project" value="GO_Central"/>
</dbReference>
<dbReference type="GO" id="GO:0051899">
    <property type="term" value="P:membrane depolarization"/>
    <property type="evidence" value="ECO:0000318"/>
    <property type="project" value="GO_Central"/>
</dbReference>
<dbReference type="GO" id="GO:0006812">
    <property type="term" value="P:monoatomic cation transport"/>
    <property type="evidence" value="ECO:0000314"/>
    <property type="project" value="RGD"/>
</dbReference>
<dbReference type="GO" id="GO:0034220">
    <property type="term" value="P:monoatomic ion transmembrane transport"/>
    <property type="evidence" value="ECO:0000318"/>
    <property type="project" value="GO_Central"/>
</dbReference>
<dbReference type="GO" id="GO:0046716">
    <property type="term" value="P:muscle cell cellular homeostasis"/>
    <property type="evidence" value="ECO:0000266"/>
    <property type="project" value="RGD"/>
</dbReference>
<dbReference type="GO" id="GO:0050881">
    <property type="term" value="P:musculoskeletal movement"/>
    <property type="evidence" value="ECO:0000266"/>
    <property type="project" value="RGD"/>
</dbReference>
<dbReference type="GO" id="GO:0007528">
    <property type="term" value="P:neuromuscular junction development"/>
    <property type="evidence" value="ECO:0000266"/>
    <property type="project" value="RGD"/>
</dbReference>
<dbReference type="GO" id="GO:0050905">
    <property type="term" value="P:neuromuscular process"/>
    <property type="evidence" value="ECO:0000266"/>
    <property type="project" value="RGD"/>
</dbReference>
<dbReference type="GO" id="GO:0007274">
    <property type="term" value="P:neuromuscular synaptic transmission"/>
    <property type="evidence" value="ECO:0000266"/>
    <property type="project" value="RGD"/>
</dbReference>
<dbReference type="GO" id="GO:0070050">
    <property type="term" value="P:neuron cellular homeostasis"/>
    <property type="evidence" value="ECO:0000266"/>
    <property type="project" value="RGD"/>
</dbReference>
<dbReference type="GO" id="GO:0019228">
    <property type="term" value="P:neuronal action potential"/>
    <property type="evidence" value="ECO:0000266"/>
    <property type="project" value="RGD"/>
</dbReference>
<dbReference type="GO" id="GO:0042391">
    <property type="term" value="P:regulation of membrane potential"/>
    <property type="evidence" value="ECO:0000266"/>
    <property type="project" value="RGD"/>
</dbReference>
<dbReference type="GO" id="GO:0035094">
    <property type="term" value="P:response to nicotine"/>
    <property type="evidence" value="ECO:0000318"/>
    <property type="project" value="GO_Central"/>
</dbReference>
<dbReference type="GO" id="GO:0003009">
    <property type="term" value="P:skeletal muscle contraction"/>
    <property type="evidence" value="ECO:0000314"/>
    <property type="project" value="RGD"/>
</dbReference>
<dbReference type="GO" id="GO:0048630">
    <property type="term" value="P:skeletal muscle tissue growth"/>
    <property type="evidence" value="ECO:0000266"/>
    <property type="project" value="RGD"/>
</dbReference>
<dbReference type="GO" id="GO:0007271">
    <property type="term" value="P:synaptic transmission, cholinergic"/>
    <property type="evidence" value="ECO:0000318"/>
    <property type="project" value="GO_Central"/>
</dbReference>
<dbReference type="CDD" id="cd19014">
    <property type="entry name" value="LGIC_ECD_nAChR_A1"/>
    <property type="match status" value="1"/>
</dbReference>
<dbReference type="CDD" id="cd19064">
    <property type="entry name" value="LGIC_TM_nAChR"/>
    <property type="match status" value="1"/>
</dbReference>
<dbReference type="FunFam" id="1.20.58.390:FF:000013">
    <property type="entry name" value="Putative acetylcholine receptor subunit alpha"/>
    <property type="match status" value="1"/>
</dbReference>
<dbReference type="FunFam" id="1.20.58.390:FF:000016">
    <property type="entry name" value="Putative acetylcholine receptor subunit alpha"/>
    <property type="match status" value="1"/>
</dbReference>
<dbReference type="FunFam" id="2.70.170.10:FF:000019">
    <property type="entry name" value="Putative acetylcholine receptor subunit alpha"/>
    <property type="match status" value="1"/>
</dbReference>
<dbReference type="Gene3D" id="2.70.170.10">
    <property type="entry name" value="Neurotransmitter-gated ion-channel ligand-binding domain"/>
    <property type="match status" value="1"/>
</dbReference>
<dbReference type="Gene3D" id="1.20.58.390">
    <property type="entry name" value="Neurotransmitter-gated ion-channel transmembrane domain"/>
    <property type="match status" value="2"/>
</dbReference>
<dbReference type="InterPro" id="IPR006202">
    <property type="entry name" value="Neur_chan_lig-bd"/>
</dbReference>
<dbReference type="InterPro" id="IPR036734">
    <property type="entry name" value="Neur_chan_lig-bd_sf"/>
</dbReference>
<dbReference type="InterPro" id="IPR006201">
    <property type="entry name" value="Neur_channel"/>
</dbReference>
<dbReference type="InterPro" id="IPR036719">
    <property type="entry name" value="Neuro-gated_channel_TM_sf"/>
</dbReference>
<dbReference type="InterPro" id="IPR038050">
    <property type="entry name" value="Neuro_actylchol_rec"/>
</dbReference>
<dbReference type="InterPro" id="IPR006029">
    <property type="entry name" value="Neurotrans-gated_channel_TM"/>
</dbReference>
<dbReference type="InterPro" id="IPR018000">
    <property type="entry name" value="Neurotransmitter_ion_chnl_CS"/>
</dbReference>
<dbReference type="InterPro" id="IPR002394">
    <property type="entry name" value="Nicotinic_acetylcholine_rcpt"/>
</dbReference>
<dbReference type="NCBIfam" id="TIGR00860">
    <property type="entry name" value="LIC"/>
    <property type="match status" value="1"/>
</dbReference>
<dbReference type="PANTHER" id="PTHR18945">
    <property type="entry name" value="NEUROTRANSMITTER GATED ION CHANNEL"/>
    <property type="match status" value="1"/>
</dbReference>
<dbReference type="Pfam" id="PF02931">
    <property type="entry name" value="Neur_chan_LBD"/>
    <property type="match status" value="1"/>
</dbReference>
<dbReference type="Pfam" id="PF02932">
    <property type="entry name" value="Neur_chan_memb"/>
    <property type="match status" value="1"/>
</dbReference>
<dbReference type="PRINTS" id="PR00254">
    <property type="entry name" value="NICOTINICR"/>
</dbReference>
<dbReference type="PRINTS" id="PR00252">
    <property type="entry name" value="NRIONCHANNEL"/>
</dbReference>
<dbReference type="SUPFAM" id="SSF90112">
    <property type="entry name" value="Neurotransmitter-gated ion-channel transmembrane pore"/>
    <property type="match status" value="1"/>
</dbReference>
<dbReference type="SUPFAM" id="SSF63712">
    <property type="entry name" value="Nicotinic receptor ligand binding domain-like"/>
    <property type="match status" value="1"/>
</dbReference>
<dbReference type="PROSITE" id="PS00236">
    <property type="entry name" value="NEUROTR_ION_CHANNEL"/>
    <property type="match status" value="1"/>
</dbReference>
<organism>
    <name type="scientific">Rattus norvegicus</name>
    <name type="common">Rat</name>
    <dbReference type="NCBI Taxonomy" id="10116"/>
    <lineage>
        <taxon>Eukaryota</taxon>
        <taxon>Metazoa</taxon>
        <taxon>Chordata</taxon>
        <taxon>Craniata</taxon>
        <taxon>Vertebrata</taxon>
        <taxon>Euteleostomi</taxon>
        <taxon>Mammalia</taxon>
        <taxon>Eutheria</taxon>
        <taxon>Euarchontoglires</taxon>
        <taxon>Glires</taxon>
        <taxon>Rodentia</taxon>
        <taxon>Myomorpha</taxon>
        <taxon>Muroidea</taxon>
        <taxon>Muridae</taxon>
        <taxon>Murinae</taxon>
        <taxon>Rattus</taxon>
    </lineage>
</organism>
<evidence type="ECO:0000250" key="1"/>
<evidence type="ECO:0000250" key="2">
    <source>
        <dbReference type="UniProtKB" id="P02708"/>
    </source>
</evidence>
<evidence type="ECO:0000250" key="3">
    <source>
        <dbReference type="UniProtKB" id="P02709"/>
    </source>
</evidence>
<evidence type="ECO:0000255" key="4"/>
<evidence type="ECO:0000305" key="5"/>
<reference key="1">
    <citation type="journal article" date="1990" name="Eur. J. Biochem.">
        <title>Primary structure and functional expression of the alpha-, beta-, gamma-, delta- and epsilon-subunits of the acetylcholine receptor from rat muscle.</title>
        <authorList>
            <person name="Witzemann V."/>
            <person name="Stein E."/>
            <person name="Barg B."/>
            <person name="Konno T."/>
            <person name="Koenen M."/>
            <person name="Kues W."/>
            <person name="Criado M."/>
            <person name="Hofmann M."/>
            <person name="Sakmann B."/>
        </authorList>
    </citation>
    <scope>NUCLEOTIDE SEQUENCE [MRNA]</scope>
    <source>
        <tissue>Muscle</tissue>
    </source>
</reference>